<comment type="function">
    <text evidence="1">ATPase which is responsible for recognizing, binding, unfolding and translocation of pupylated proteins into the bacterial 20S proteasome core particle. May be essential for opening the gate of the 20S proteasome via an interaction with its C-terminus, thereby allowing substrate entry and access to the site of proteolysis. Thus, the C-termini of the proteasomal ATPase may function like a 'key in a lock' to induce gate opening and therefore regulate proteolysis.</text>
</comment>
<comment type="pathway">
    <text evidence="1">Protein degradation; proteasomal Pup-dependent pathway.</text>
</comment>
<comment type="subunit">
    <text evidence="1">Homohexamer. Assembles into a hexameric ring structure that caps the 20S proteasome core. Strongly interacts with the prokaryotic ubiquitin-like protein Pup through a hydrophobic interface; the interacting region of ARC lies in its N-terminal coiled-coil domain. There is one Pup binding site per ARC hexamer ring. Upon ATP-binding, the C-terminus of ARC interacts with the alpha-rings of the proteasome core, possibly by binding to the intersubunit pockets.</text>
</comment>
<comment type="domain">
    <text evidence="1">Consists of three main regions, an N-terminal coiled-coil domain that binds to protein Pup and functions as a docking station, an interdomain involved in ARC hexamerization, and a C-terminal ATPase domain of the AAA type.</text>
</comment>
<comment type="similarity">
    <text evidence="1">Belongs to the AAA ATPase family.</text>
</comment>
<proteinExistence type="inferred from homology"/>
<evidence type="ECO:0000255" key="1">
    <source>
        <dbReference type="HAMAP-Rule" id="MF_02112"/>
    </source>
</evidence>
<evidence type="ECO:0000256" key="2">
    <source>
        <dbReference type="SAM" id="MobiDB-lite"/>
    </source>
</evidence>
<sequence>MARSDDADSRAARWEKEAHDLSTQVAFLQEELALVRRKLTESPRQVRQLEERLAAAQAQLARLTENNERLVSTLKEARAQIVTLKEEIDRLAQPPSGYGVFLARHDDGTVDVFTGGRKLRVAVSPSLEVADLRRGQEVLLNDALNIVDAFGYERAGEVVMLKEVLAGPDGAPGDRALVVSHSDEERVVHLAETLIDAPIRAGDSLMIEPRSAYAYERIPKSEVEELVLEEVPDVDYTDIGGLHAQIEQIRDAVELPFLHADLFREHQLRPPKGILLYGPPGCGKTLIAKAVANSLAKKIAERRGEEKHTSYFLNIKGPELLNKYVGETERHIRLVFQRAREKAGEGTPVIVFFDEMDSVFRTRGSGVSSDVENTIVPQLLSEIDGVEGLENVIVIGASNREDMIDPAILRPGRLDVKIKIERPDAEAAKDIFSKYILPGLPLHPDDLAEHDSDPQATVAAMIDAVVLRMYSETEENRFLEVTYANGDKDVLYFKDFNSGAMIQNIVDRGKKMAIKEFLTSARKGMRLQHLLDACVDEFRENEDLPNTTNPDDWARISGKKGERIVYIRTLVSGGKGADAGRSIETASNTGQYL</sequence>
<accession>A4X741</accession>
<reference key="1">
    <citation type="journal article" date="2007" name="Proc. Natl. Acad. Sci. U.S.A.">
        <title>Genome sequencing reveals complex secondary metabolome in the marine actinomycete Salinispora tropica.</title>
        <authorList>
            <person name="Udwary D.W."/>
            <person name="Zeigler L."/>
            <person name="Asolkar R.N."/>
            <person name="Singan V."/>
            <person name="Lapidus A."/>
            <person name="Fenical W."/>
            <person name="Jensen P.R."/>
            <person name="Moore B.S."/>
        </authorList>
    </citation>
    <scope>NUCLEOTIDE SEQUENCE [LARGE SCALE GENOMIC DNA]</scope>
    <source>
        <strain>ATCC BAA-916 / DSM 44818 / JCM 13857 / NBRC 105044 / CNB-440</strain>
    </source>
</reference>
<gene>
    <name evidence="1" type="primary">arc</name>
    <name type="ordered locus">Strop_2241</name>
</gene>
<organism>
    <name type="scientific">Salinispora tropica (strain ATCC BAA-916 / DSM 44818 / JCM 13857 / NBRC 105044 / CNB-440)</name>
    <dbReference type="NCBI Taxonomy" id="369723"/>
    <lineage>
        <taxon>Bacteria</taxon>
        <taxon>Bacillati</taxon>
        <taxon>Actinomycetota</taxon>
        <taxon>Actinomycetes</taxon>
        <taxon>Micromonosporales</taxon>
        <taxon>Micromonosporaceae</taxon>
        <taxon>Salinispora</taxon>
    </lineage>
</organism>
<protein>
    <recommendedName>
        <fullName evidence="1">Proteasome-associated ATPase</fullName>
    </recommendedName>
    <alternativeName>
        <fullName evidence="1">AAA ATPase forming ring-shaped complexes</fullName>
        <shortName evidence="1">ARC</shortName>
    </alternativeName>
    <alternativeName>
        <fullName evidence="1">Proteasomal ATPase</fullName>
    </alternativeName>
</protein>
<name>ARC_SALTO</name>
<keyword id="KW-0067">ATP-binding</keyword>
<keyword id="KW-0143">Chaperone</keyword>
<keyword id="KW-0175">Coiled coil</keyword>
<keyword id="KW-0547">Nucleotide-binding</keyword>
<keyword id="KW-0647">Proteasome</keyword>
<keyword id="KW-1185">Reference proteome</keyword>
<feature type="chain" id="PRO_0000397019" description="Proteasome-associated ATPase">
    <location>
        <begin position="1"/>
        <end position="593"/>
    </location>
</feature>
<feature type="region of interest" description="Disordered" evidence="2">
    <location>
        <begin position="574"/>
        <end position="593"/>
    </location>
</feature>
<feature type="region of interest" description="Docks into pockets in the proteasome alpha-ring" evidence="1">
    <location>
        <begin position="592"/>
        <end position="593"/>
    </location>
</feature>
<feature type="coiled-coil region" evidence="1">
    <location>
        <begin position="5"/>
        <end position="94"/>
    </location>
</feature>
<feature type="compositionally biased region" description="Polar residues" evidence="2">
    <location>
        <begin position="584"/>
        <end position="593"/>
    </location>
</feature>
<feature type="binding site" evidence="1">
    <location>
        <begin position="281"/>
        <end position="286"/>
    </location>
    <ligand>
        <name>ATP</name>
        <dbReference type="ChEBI" id="CHEBI:30616"/>
    </ligand>
</feature>
<dbReference type="EMBL" id="CP000667">
    <property type="protein sequence ID" value="ABP54691.1"/>
    <property type="molecule type" value="Genomic_DNA"/>
</dbReference>
<dbReference type="RefSeq" id="WP_011906121.1">
    <property type="nucleotide sequence ID" value="NC_009380.1"/>
</dbReference>
<dbReference type="SMR" id="A4X741"/>
<dbReference type="STRING" id="369723.Strop_2241"/>
<dbReference type="KEGG" id="stp:Strop_2241"/>
<dbReference type="PATRIC" id="fig|369723.5.peg.2298"/>
<dbReference type="eggNOG" id="COG1222">
    <property type="taxonomic scope" value="Bacteria"/>
</dbReference>
<dbReference type="HOGENOM" id="CLU_036054_0_0_11"/>
<dbReference type="UniPathway" id="UPA00997"/>
<dbReference type="Proteomes" id="UP000000235">
    <property type="component" value="Chromosome"/>
</dbReference>
<dbReference type="GO" id="GO:0000502">
    <property type="term" value="C:proteasome complex"/>
    <property type="evidence" value="ECO:0007669"/>
    <property type="project" value="UniProtKB-KW"/>
</dbReference>
<dbReference type="GO" id="GO:0005524">
    <property type="term" value="F:ATP binding"/>
    <property type="evidence" value="ECO:0007669"/>
    <property type="project" value="UniProtKB-UniRule"/>
</dbReference>
<dbReference type="GO" id="GO:0016887">
    <property type="term" value="F:ATP hydrolysis activity"/>
    <property type="evidence" value="ECO:0007669"/>
    <property type="project" value="UniProtKB-UniRule"/>
</dbReference>
<dbReference type="GO" id="GO:0019941">
    <property type="term" value="P:modification-dependent protein catabolic process"/>
    <property type="evidence" value="ECO:0007669"/>
    <property type="project" value="InterPro"/>
</dbReference>
<dbReference type="GO" id="GO:0010498">
    <property type="term" value="P:proteasomal protein catabolic process"/>
    <property type="evidence" value="ECO:0007669"/>
    <property type="project" value="InterPro"/>
</dbReference>
<dbReference type="FunFam" id="3.40.50.300:FF:000155">
    <property type="entry name" value="AAA ATPase forming ring-shaped complexes"/>
    <property type="match status" value="1"/>
</dbReference>
<dbReference type="Gene3D" id="1.10.8.60">
    <property type="match status" value="1"/>
</dbReference>
<dbReference type="Gene3D" id="1.20.5.170">
    <property type="match status" value="1"/>
</dbReference>
<dbReference type="Gene3D" id="2.40.50.140">
    <property type="entry name" value="Nucleic acid-binding proteins"/>
    <property type="match status" value="2"/>
</dbReference>
<dbReference type="Gene3D" id="3.40.50.300">
    <property type="entry name" value="P-loop containing nucleotide triphosphate hydrolases"/>
    <property type="match status" value="1"/>
</dbReference>
<dbReference type="HAMAP" id="MF_02112">
    <property type="entry name" value="ARC_ATPase"/>
    <property type="match status" value="1"/>
</dbReference>
<dbReference type="InterPro" id="IPR003593">
    <property type="entry name" value="AAA+_ATPase"/>
</dbReference>
<dbReference type="InterPro" id="IPR050168">
    <property type="entry name" value="AAA_ATPase_domain"/>
</dbReference>
<dbReference type="InterPro" id="IPR003959">
    <property type="entry name" value="ATPase_AAA_core"/>
</dbReference>
<dbReference type="InterPro" id="IPR003960">
    <property type="entry name" value="ATPase_AAA_CS"/>
</dbReference>
<dbReference type="InterPro" id="IPR012340">
    <property type="entry name" value="NA-bd_OB-fold"/>
</dbReference>
<dbReference type="InterPro" id="IPR027417">
    <property type="entry name" value="P-loop_NTPase"/>
</dbReference>
<dbReference type="InterPro" id="IPR032501">
    <property type="entry name" value="Prot_ATP_ID_OB_2nd"/>
</dbReference>
<dbReference type="InterPro" id="IPR041626">
    <property type="entry name" value="Prot_ATP_ID_OB_N"/>
</dbReference>
<dbReference type="InterPro" id="IPR022482">
    <property type="entry name" value="Proteasome_ATPase"/>
</dbReference>
<dbReference type="NCBIfam" id="TIGR03689">
    <property type="entry name" value="pup_AAA"/>
    <property type="match status" value="1"/>
</dbReference>
<dbReference type="PANTHER" id="PTHR23077">
    <property type="entry name" value="AAA-FAMILY ATPASE"/>
    <property type="match status" value="1"/>
</dbReference>
<dbReference type="PANTHER" id="PTHR23077:SF144">
    <property type="entry name" value="PROTEASOME-ASSOCIATED ATPASE"/>
    <property type="match status" value="1"/>
</dbReference>
<dbReference type="Pfam" id="PF00004">
    <property type="entry name" value="AAA"/>
    <property type="match status" value="1"/>
</dbReference>
<dbReference type="Pfam" id="PF16450">
    <property type="entry name" value="Prot_ATP_ID_OB_C"/>
    <property type="match status" value="1"/>
</dbReference>
<dbReference type="Pfam" id="PF17758">
    <property type="entry name" value="Prot_ATP_ID_OB_N"/>
    <property type="match status" value="1"/>
</dbReference>
<dbReference type="SMART" id="SM00382">
    <property type="entry name" value="AAA"/>
    <property type="match status" value="1"/>
</dbReference>
<dbReference type="SUPFAM" id="SSF52540">
    <property type="entry name" value="P-loop containing nucleoside triphosphate hydrolases"/>
    <property type="match status" value="1"/>
</dbReference>
<dbReference type="PROSITE" id="PS00674">
    <property type="entry name" value="AAA"/>
    <property type="match status" value="1"/>
</dbReference>